<keyword id="KW-0067">ATP-binding</keyword>
<keyword id="KW-0963">Cytoplasm</keyword>
<keyword id="KW-0227">DNA damage</keyword>
<keyword id="KW-0228">DNA excision</keyword>
<keyword id="KW-0234">DNA repair</keyword>
<keyword id="KW-0267">Excision nuclease</keyword>
<keyword id="KW-0547">Nucleotide-binding</keyword>
<keyword id="KW-1185">Reference proteome</keyword>
<keyword id="KW-0742">SOS response</keyword>
<name>UVRB_LEIXX</name>
<gene>
    <name evidence="1" type="primary">uvrB</name>
    <name type="ordered locus">Lxx11450</name>
</gene>
<reference key="1">
    <citation type="journal article" date="2004" name="Mol. Plant Microbe Interact.">
        <title>The genome sequence of the Gram-positive sugarcane pathogen Leifsonia xyli subsp. xyli.</title>
        <authorList>
            <person name="Monteiro-Vitorello C.B."/>
            <person name="Camargo L.E.A."/>
            <person name="Van Sluys M.A."/>
            <person name="Kitajima J.P."/>
            <person name="Truffi D."/>
            <person name="do Amaral A.M."/>
            <person name="Harakava R."/>
            <person name="de Oliveira J.C.F."/>
            <person name="Wood D."/>
            <person name="de Oliveira M.C."/>
            <person name="Miyaki C.Y."/>
            <person name="Takita M.A."/>
            <person name="da Silva A.C.R."/>
            <person name="Furlan L.R."/>
            <person name="Carraro D.M."/>
            <person name="Camarotte G."/>
            <person name="Almeida N.F. Jr."/>
            <person name="Carrer H."/>
            <person name="Coutinho L.L."/>
            <person name="El-Dorry H.A."/>
            <person name="Ferro M.I.T."/>
            <person name="Gagliardi P.R."/>
            <person name="Giglioti E."/>
            <person name="Goldman M.H.S."/>
            <person name="Goldman G.H."/>
            <person name="Kimura E.T."/>
            <person name="Ferro E.S."/>
            <person name="Kuramae E.E."/>
            <person name="Lemos E.G.M."/>
            <person name="Lemos M.V.F."/>
            <person name="Mauro S.M.Z."/>
            <person name="Machado M.A."/>
            <person name="Marino C.L."/>
            <person name="Menck C.F."/>
            <person name="Nunes L.R."/>
            <person name="Oliveira R.C."/>
            <person name="Pereira G.G."/>
            <person name="Siqueira W."/>
            <person name="de Souza A.A."/>
            <person name="Tsai S.M."/>
            <person name="Zanca A.S."/>
            <person name="Simpson A.J.G."/>
            <person name="Brumbley S.M."/>
            <person name="Setubal J.C."/>
        </authorList>
    </citation>
    <scope>NUCLEOTIDE SEQUENCE [LARGE SCALE GENOMIC DNA]</scope>
    <source>
        <strain>CTCB07</strain>
    </source>
</reference>
<organism>
    <name type="scientific">Leifsonia xyli subsp. xyli (strain CTCB07)</name>
    <dbReference type="NCBI Taxonomy" id="281090"/>
    <lineage>
        <taxon>Bacteria</taxon>
        <taxon>Bacillati</taxon>
        <taxon>Actinomycetota</taxon>
        <taxon>Actinomycetes</taxon>
        <taxon>Micrococcales</taxon>
        <taxon>Microbacteriaceae</taxon>
        <taxon>Leifsonia</taxon>
    </lineage>
</organism>
<sequence length="688" mass="76786">MEPTRLVRPFEVVSEYQPSGDQPKAIAELAGRITAGETDVVLLGATGTGKSATTAWLVEAVQRPTLVLAHNKTLAAQLANEFRELLPNNAVEYFVSYYDYYQPEAYVPQTDTFIEKDSSINAEVERLRHSTTNSLLSRRDVVVVSTVSCIYGLGAAEEYLEAMVALQVGQNVGRDQLIRRFVAMQYERNDIDFSRGKFRVRGDTIEIIPVYEEHALRIELFGDEIEALYSLHPLTGEVLARTDAVSVFPATHYAASPATIQRAIGTIQTELHDRLVELEREGKLLEAQRLRMRTQFDIEMMEQIGFCSGIENYSRHIDGRAPGEAPHCLLDYFPDDFLVVIDESHVTVPQIGAMYEGDASRKRTLVEHGFRLPSAMDNRPLRWNEFKERVGQTVYLSATPGQYELGIADGVVEQIIRPTGLVDPQILVKPTKGQIDDLLEEIRARAERDERVLVTTLTKKMAEELTDFLAEAGVKVRYLHADVDTLRRVELLTELRSGVFDVLVGINLLREGLDLPEVSLVAILDADKEGFLRSSTSLIQTIGRAARNVSGEVHMYADVLTDSMKKAIEETSRRSELQVEYNRANGIDPQPLRKRIADITDILAREEADTAKILAGRDQKRKSPTPSLRSGGIAAQGAAELESLIADLNAQMLAAAGELKFELAARLRDELSDLKRDLRQMEKAGHLS</sequence>
<proteinExistence type="inferred from homology"/>
<comment type="function">
    <text evidence="1">The UvrABC repair system catalyzes the recognition and processing of DNA lesions. A damage recognition complex composed of 2 UvrA and 2 UvrB subunits scans DNA for abnormalities. Upon binding of the UvrA(2)B(2) complex to a putative damaged site, the DNA wraps around one UvrB monomer. DNA wrap is dependent on ATP binding by UvrB and probably causes local melting of the DNA helix, facilitating insertion of UvrB beta-hairpin between the DNA strands. Then UvrB probes one DNA strand for the presence of a lesion. If a lesion is found the UvrA subunits dissociate and the UvrB-DNA preincision complex is formed. This complex is subsequently bound by UvrC and the second UvrB is released. If no lesion is found, the DNA wraps around the other UvrB subunit that will check the other stand for damage.</text>
</comment>
<comment type="subunit">
    <text evidence="1">Forms a heterotetramer with UvrA during the search for lesions. Interacts with UvrC in an incision complex.</text>
</comment>
<comment type="subcellular location">
    <subcellularLocation>
        <location evidence="1">Cytoplasm</location>
    </subcellularLocation>
</comment>
<comment type="domain">
    <text evidence="1">The beta-hairpin motif is involved in DNA binding.</text>
</comment>
<comment type="similarity">
    <text evidence="1">Belongs to the UvrB family.</text>
</comment>
<feature type="chain" id="PRO_0000138400" description="UvrABC system protein B">
    <location>
        <begin position="1"/>
        <end position="688"/>
    </location>
</feature>
<feature type="domain" description="Helicase ATP-binding" evidence="1">
    <location>
        <begin position="31"/>
        <end position="414"/>
    </location>
</feature>
<feature type="domain" description="Helicase C-terminal" evidence="1">
    <location>
        <begin position="434"/>
        <end position="600"/>
    </location>
</feature>
<feature type="domain" description="UVR" evidence="1">
    <location>
        <begin position="642"/>
        <end position="677"/>
    </location>
</feature>
<feature type="region of interest" description="Disordered" evidence="2">
    <location>
        <begin position="614"/>
        <end position="633"/>
    </location>
</feature>
<feature type="short sequence motif" description="Beta-hairpin">
    <location>
        <begin position="97"/>
        <end position="120"/>
    </location>
</feature>
<feature type="binding site" evidence="1">
    <location>
        <begin position="44"/>
        <end position="51"/>
    </location>
    <ligand>
        <name>ATP</name>
        <dbReference type="ChEBI" id="CHEBI:30616"/>
    </ligand>
</feature>
<accession>Q6AF52</accession>
<protein>
    <recommendedName>
        <fullName evidence="1">UvrABC system protein B</fullName>
        <shortName evidence="1">Protein UvrB</shortName>
    </recommendedName>
    <alternativeName>
        <fullName evidence="1">Excinuclease ABC subunit B</fullName>
    </alternativeName>
</protein>
<dbReference type="EMBL" id="AE016822">
    <property type="protein sequence ID" value="AAT88993.1"/>
    <property type="molecule type" value="Genomic_DNA"/>
</dbReference>
<dbReference type="RefSeq" id="WP_011185989.1">
    <property type="nucleotide sequence ID" value="NC_006087.1"/>
</dbReference>
<dbReference type="SMR" id="Q6AF52"/>
<dbReference type="STRING" id="281090.Lxx11450"/>
<dbReference type="KEGG" id="lxx:Lxx11450"/>
<dbReference type="eggNOG" id="COG0556">
    <property type="taxonomic scope" value="Bacteria"/>
</dbReference>
<dbReference type="HOGENOM" id="CLU_009621_2_1_11"/>
<dbReference type="Proteomes" id="UP000001306">
    <property type="component" value="Chromosome"/>
</dbReference>
<dbReference type="GO" id="GO:0005737">
    <property type="term" value="C:cytoplasm"/>
    <property type="evidence" value="ECO:0007669"/>
    <property type="project" value="UniProtKB-SubCell"/>
</dbReference>
<dbReference type="GO" id="GO:0009380">
    <property type="term" value="C:excinuclease repair complex"/>
    <property type="evidence" value="ECO:0007669"/>
    <property type="project" value="InterPro"/>
</dbReference>
<dbReference type="GO" id="GO:0005524">
    <property type="term" value="F:ATP binding"/>
    <property type="evidence" value="ECO:0007669"/>
    <property type="project" value="UniProtKB-UniRule"/>
</dbReference>
<dbReference type="GO" id="GO:0016887">
    <property type="term" value="F:ATP hydrolysis activity"/>
    <property type="evidence" value="ECO:0007669"/>
    <property type="project" value="InterPro"/>
</dbReference>
<dbReference type="GO" id="GO:0003677">
    <property type="term" value="F:DNA binding"/>
    <property type="evidence" value="ECO:0007669"/>
    <property type="project" value="UniProtKB-UniRule"/>
</dbReference>
<dbReference type="GO" id="GO:0009381">
    <property type="term" value="F:excinuclease ABC activity"/>
    <property type="evidence" value="ECO:0007669"/>
    <property type="project" value="UniProtKB-UniRule"/>
</dbReference>
<dbReference type="GO" id="GO:0006289">
    <property type="term" value="P:nucleotide-excision repair"/>
    <property type="evidence" value="ECO:0007669"/>
    <property type="project" value="UniProtKB-UniRule"/>
</dbReference>
<dbReference type="GO" id="GO:0009432">
    <property type="term" value="P:SOS response"/>
    <property type="evidence" value="ECO:0007669"/>
    <property type="project" value="UniProtKB-UniRule"/>
</dbReference>
<dbReference type="CDD" id="cd17916">
    <property type="entry name" value="DEXHc_UvrB"/>
    <property type="match status" value="1"/>
</dbReference>
<dbReference type="CDD" id="cd18790">
    <property type="entry name" value="SF2_C_UvrB"/>
    <property type="match status" value="1"/>
</dbReference>
<dbReference type="Gene3D" id="3.40.50.300">
    <property type="entry name" value="P-loop containing nucleotide triphosphate hydrolases"/>
    <property type="match status" value="3"/>
</dbReference>
<dbReference type="Gene3D" id="4.10.860.10">
    <property type="entry name" value="UVR domain"/>
    <property type="match status" value="1"/>
</dbReference>
<dbReference type="HAMAP" id="MF_00204">
    <property type="entry name" value="UvrB"/>
    <property type="match status" value="1"/>
</dbReference>
<dbReference type="InterPro" id="IPR006935">
    <property type="entry name" value="Helicase/UvrB_N"/>
</dbReference>
<dbReference type="InterPro" id="IPR014001">
    <property type="entry name" value="Helicase_ATP-bd"/>
</dbReference>
<dbReference type="InterPro" id="IPR001650">
    <property type="entry name" value="Helicase_C-like"/>
</dbReference>
<dbReference type="InterPro" id="IPR027417">
    <property type="entry name" value="P-loop_NTPase"/>
</dbReference>
<dbReference type="InterPro" id="IPR001943">
    <property type="entry name" value="UVR_dom"/>
</dbReference>
<dbReference type="InterPro" id="IPR036876">
    <property type="entry name" value="UVR_dom_sf"/>
</dbReference>
<dbReference type="InterPro" id="IPR004807">
    <property type="entry name" value="UvrB"/>
</dbReference>
<dbReference type="InterPro" id="IPR041471">
    <property type="entry name" value="UvrB_inter"/>
</dbReference>
<dbReference type="InterPro" id="IPR024759">
    <property type="entry name" value="UvrB_YAD/RRR_dom"/>
</dbReference>
<dbReference type="NCBIfam" id="NF003673">
    <property type="entry name" value="PRK05298.1"/>
    <property type="match status" value="1"/>
</dbReference>
<dbReference type="NCBIfam" id="TIGR00631">
    <property type="entry name" value="uvrb"/>
    <property type="match status" value="1"/>
</dbReference>
<dbReference type="PANTHER" id="PTHR24029">
    <property type="entry name" value="UVRABC SYSTEM PROTEIN B"/>
    <property type="match status" value="1"/>
</dbReference>
<dbReference type="PANTHER" id="PTHR24029:SF0">
    <property type="entry name" value="UVRABC SYSTEM PROTEIN B"/>
    <property type="match status" value="1"/>
</dbReference>
<dbReference type="Pfam" id="PF00271">
    <property type="entry name" value="Helicase_C"/>
    <property type="match status" value="1"/>
</dbReference>
<dbReference type="Pfam" id="PF04851">
    <property type="entry name" value="ResIII"/>
    <property type="match status" value="1"/>
</dbReference>
<dbReference type="Pfam" id="PF02151">
    <property type="entry name" value="UVR"/>
    <property type="match status" value="1"/>
</dbReference>
<dbReference type="Pfam" id="PF12344">
    <property type="entry name" value="UvrB"/>
    <property type="match status" value="1"/>
</dbReference>
<dbReference type="Pfam" id="PF17757">
    <property type="entry name" value="UvrB_inter"/>
    <property type="match status" value="1"/>
</dbReference>
<dbReference type="SMART" id="SM00487">
    <property type="entry name" value="DEXDc"/>
    <property type="match status" value="1"/>
</dbReference>
<dbReference type="SMART" id="SM00490">
    <property type="entry name" value="HELICc"/>
    <property type="match status" value="1"/>
</dbReference>
<dbReference type="SUPFAM" id="SSF46600">
    <property type="entry name" value="C-terminal UvrC-binding domain of UvrB"/>
    <property type="match status" value="1"/>
</dbReference>
<dbReference type="SUPFAM" id="SSF52540">
    <property type="entry name" value="P-loop containing nucleoside triphosphate hydrolases"/>
    <property type="match status" value="2"/>
</dbReference>
<dbReference type="PROSITE" id="PS51192">
    <property type="entry name" value="HELICASE_ATP_BIND_1"/>
    <property type="match status" value="1"/>
</dbReference>
<dbReference type="PROSITE" id="PS51194">
    <property type="entry name" value="HELICASE_CTER"/>
    <property type="match status" value="1"/>
</dbReference>
<dbReference type="PROSITE" id="PS50151">
    <property type="entry name" value="UVR"/>
    <property type="match status" value="1"/>
</dbReference>
<evidence type="ECO:0000255" key="1">
    <source>
        <dbReference type="HAMAP-Rule" id="MF_00204"/>
    </source>
</evidence>
<evidence type="ECO:0000256" key="2">
    <source>
        <dbReference type="SAM" id="MobiDB-lite"/>
    </source>
</evidence>